<name>NUOA_PSEPG</name>
<evidence type="ECO:0000255" key="1">
    <source>
        <dbReference type="HAMAP-Rule" id="MF_01394"/>
    </source>
</evidence>
<keyword id="KW-0997">Cell inner membrane</keyword>
<keyword id="KW-1003">Cell membrane</keyword>
<keyword id="KW-0472">Membrane</keyword>
<keyword id="KW-0520">NAD</keyword>
<keyword id="KW-0874">Quinone</keyword>
<keyword id="KW-1278">Translocase</keyword>
<keyword id="KW-0812">Transmembrane</keyword>
<keyword id="KW-1133">Transmembrane helix</keyword>
<keyword id="KW-0813">Transport</keyword>
<keyword id="KW-0830">Ubiquinone</keyword>
<reference key="1">
    <citation type="submission" date="2008-01" db="EMBL/GenBank/DDBJ databases">
        <title>Complete sequence of Pseudomonas putida GB-1.</title>
        <authorList>
            <consortium name="US DOE Joint Genome Institute"/>
            <person name="Copeland A."/>
            <person name="Lucas S."/>
            <person name="Lapidus A."/>
            <person name="Barry K."/>
            <person name="Glavina del Rio T."/>
            <person name="Dalin E."/>
            <person name="Tice H."/>
            <person name="Pitluck S."/>
            <person name="Bruce D."/>
            <person name="Goodwin L."/>
            <person name="Chertkov O."/>
            <person name="Brettin T."/>
            <person name="Detter J.C."/>
            <person name="Han C."/>
            <person name="Kuske C.R."/>
            <person name="Schmutz J."/>
            <person name="Larimer F."/>
            <person name="Land M."/>
            <person name="Hauser L."/>
            <person name="Kyrpides N."/>
            <person name="Kim E."/>
            <person name="McCarthy J.K."/>
            <person name="Richardson P."/>
        </authorList>
    </citation>
    <scope>NUCLEOTIDE SEQUENCE [LARGE SCALE GENOMIC DNA]</scope>
    <source>
        <strain>GB-1</strain>
    </source>
</reference>
<organism>
    <name type="scientific">Pseudomonas putida (strain GB-1)</name>
    <dbReference type="NCBI Taxonomy" id="76869"/>
    <lineage>
        <taxon>Bacteria</taxon>
        <taxon>Pseudomonadati</taxon>
        <taxon>Pseudomonadota</taxon>
        <taxon>Gammaproteobacteria</taxon>
        <taxon>Pseudomonadales</taxon>
        <taxon>Pseudomonadaceae</taxon>
        <taxon>Pseudomonas</taxon>
    </lineage>
</organism>
<sequence length="137" mass="15085">MSDSAGLIAHNWGFAIFLLGVVGLCAFMLGLSSLLGSKAWGRAKNEPFESGMLPVGSARLRLSAKFYLVAMLFVIFDIEALFLFAWSVSVRESGWTGFVEALVFIAILLAGLVYLWRVGALDWAPEGRRKRQAKLKQ</sequence>
<proteinExistence type="inferred from homology"/>
<protein>
    <recommendedName>
        <fullName evidence="1">NADH-quinone oxidoreductase subunit A</fullName>
        <ecNumber evidence="1">7.1.1.-</ecNumber>
    </recommendedName>
    <alternativeName>
        <fullName evidence="1">NADH dehydrogenase I subunit A</fullName>
    </alternativeName>
    <alternativeName>
        <fullName evidence="1">NDH-1 subunit A</fullName>
    </alternativeName>
    <alternativeName>
        <fullName evidence="1">NUO1</fullName>
    </alternativeName>
</protein>
<gene>
    <name evidence="1" type="primary">nuoA</name>
    <name type="ordered locus">PputGB1_3691</name>
</gene>
<dbReference type="EC" id="7.1.1.-" evidence="1"/>
<dbReference type="EMBL" id="CP000926">
    <property type="protein sequence ID" value="ABY99582.1"/>
    <property type="molecule type" value="Genomic_DNA"/>
</dbReference>
<dbReference type="RefSeq" id="WP_003251427.1">
    <property type="nucleotide sequence ID" value="NC_010322.1"/>
</dbReference>
<dbReference type="SMR" id="B0KMX8"/>
<dbReference type="KEGG" id="ppg:PputGB1_3691"/>
<dbReference type="eggNOG" id="COG0838">
    <property type="taxonomic scope" value="Bacteria"/>
</dbReference>
<dbReference type="HOGENOM" id="CLU_119549_2_1_6"/>
<dbReference type="Proteomes" id="UP000002157">
    <property type="component" value="Chromosome"/>
</dbReference>
<dbReference type="GO" id="GO:0030964">
    <property type="term" value="C:NADH dehydrogenase complex"/>
    <property type="evidence" value="ECO:0007669"/>
    <property type="project" value="TreeGrafter"/>
</dbReference>
<dbReference type="GO" id="GO:0005886">
    <property type="term" value="C:plasma membrane"/>
    <property type="evidence" value="ECO:0007669"/>
    <property type="project" value="UniProtKB-SubCell"/>
</dbReference>
<dbReference type="GO" id="GO:0008137">
    <property type="term" value="F:NADH dehydrogenase (ubiquinone) activity"/>
    <property type="evidence" value="ECO:0007669"/>
    <property type="project" value="InterPro"/>
</dbReference>
<dbReference type="GO" id="GO:0050136">
    <property type="term" value="F:NADH:ubiquinone reductase (non-electrogenic) activity"/>
    <property type="evidence" value="ECO:0007669"/>
    <property type="project" value="UniProtKB-UniRule"/>
</dbReference>
<dbReference type="GO" id="GO:0048038">
    <property type="term" value="F:quinone binding"/>
    <property type="evidence" value="ECO:0007669"/>
    <property type="project" value="UniProtKB-KW"/>
</dbReference>
<dbReference type="FunFam" id="1.20.58.1610:FF:000003">
    <property type="entry name" value="NADH-quinone oxidoreductase subunit A"/>
    <property type="match status" value="1"/>
</dbReference>
<dbReference type="Gene3D" id="1.20.58.1610">
    <property type="entry name" value="NADH:ubiquinone/plastoquinone oxidoreductase, chain 3"/>
    <property type="match status" value="1"/>
</dbReference>
<dbReference type="HAMAP" id="MF_01394">
    <property type="entry name" value="NDH1_NuoA"/>
    <property type="match status" value="1"/>
</dbReference>
<dbReference type="InterPro" id="IPR023043">
    <property type="entry name" value="NAD(P)H_OxRDtase_bac/plastid"/>
</dbReference>
<dbReference type="InterPro" id="IPR000440">
    <property type="entry name" value="NADH_UbQ/plastoQ_OxRdtase_su3"/>
</dbReference>
<dbReference type="InterPro" id="IPR038430">
    <property type="entry name" value="NDAH_ubi_oxred_su3_sf"/>
</dbReference>
<dbReference type="PANTHER" id="PTHR11058:SF21">
    <property type="entry name" value="NADH-QUINONE OXIDOREDUCTASE SUBUNIT A"/>
    <property type="match status" value="1"/>
</dbReference>
<dbReference type="PANTHER" id="PTHR11058">
    <property type="entry name" value="NADH-UBIQUINONE OXIDOREDUCTASE CHAIN 3"/>
    <property type="match status" value="1"/>
</dbReference>
<dbReference type="Pfam" id="PF00507">
    <property type="entry name" value="Oxidored_q4"/>
    <property type="match status" value="1"/>
</dbReference>
<comment type="function">
    <text evidence="1">NDH-1 shuttles electrons from NADH, via FMN and iron-sulfur (Fe-S) centers, to quinones in the respiratory chain. The immediate electron acceptor for the enzyme in this species is believed to be ubiquinone. Couples the redox reaction to proton translocation (for every two electrons transferred, four hydrogen ions are translocated across the cytoplasmic membrane), and thus conserves the redox energy in a proton gradient.</text>
</comment>
<comment type="catalytic activity">
    <reaction evidence="1">
        <text>a quinone + NADH + 5 H(+)(in) = a quinol + NAD(+) + 4 H(+)(out)</text>
        <dbReference type="Rhea" id="RHEA:57888"/>
        <dbReference type="ChEBI" id="CHEBI:15378"/>
        <dbReference type="ChEBI" id="CHEBI:24646"/>
        <dbReference type="ChEBI" id="CHEBI:57540"/>
        <dbReference type="ChEBI" id="CHEBI:57945"/>
        <dbReference type="ChEBI" id="CHEBI:132124"/>
    </reaction>
</comment>
<comment type="subunit">
    <text evidence="1">NDH-1 is composed of 13 different subunits. Subunits NuoA, H, J, K, L, M, N constitute the membrane sector of the complex.</text>
</comment>
<comment type="subcellular location">
    <subcellularLocation>
        <location evidence="1">Cell inner membrane</location>
        <topology evidence="1">Multi-pass membrane protein</topology>
    </subcellularLocation>
</comment>
<comment type="similarity">
    <text evidence="1">Belongs to the complex I subunit 3 family.</text>
</comment>
<accession>B0KMX8</accession>
<feature type="chain" id="PRO_0000362742" description="NADH-quinone oxidoreductase subunit A">
    <location>
        <begin position="1"/>
        <end position="137"/>
    </location>
</feature>
<feature type="transmembrane region" description="Helical" evidence="1">
    <location>
        <begin position="12"/>
        <end position="32"/>
    </location>
</feature>
<feature type="transmembrane region" description="Helical" evidence="1">
    <location>
        <begin position="66"/>
        <end position="86"/>
    </location>
</feature>
<feature type="transmembrane region" description="Helical" evidence="1">
    <location>
        <begin position="95"/>
        <end position="115"/>
    </location>
</feature>